<dbReference type="EMBL" id="BC100273">
    <property type="protein sequence ID" value="AAI00274.1"/>
    <property type="molecule type" value="mRNA"/>
</dbReference>
<dbReference type="RefSeq" id="NP_001165090.1">
    <property type="nucleotide sequence ID" value="NM_001171619.1"/>
</dbReference>
<dbReference type="SMR" id="Q498C5"/>
<dbReference type="DNASU" id="734729"/>
<dbReference type="GeneID" id="734729"/>
<dbReference type="KEGG" id="xla:734729"/>
<dbReference type="AGR" id="Xenbase:XB-GENE-6255293"/>
<dbReference type="CTD" id="734729"/>
<dbReference type="Xenbase" id="XB-GENE-6255293">
    <property type="gene designation" value="abracl.L"/>
</dbReference>
<dbReference type="OrthoDB" id="9871914at2759"/>
<dbReference type="Proteomes" id="UP000186698">
    <property type="component" value="Chromosome 5L"/>
</dbReference>
<dbReference type="Bgee" id="734729">
    <property type="expression patterns" value="Expressed in spleen and 19 other cell types or tissues"/>
</dbReference>
<dbReference type="GO" id="GO:0032970">
    <property type="term" value="P:regulation of actin filament-based process"/>
    <property type="evidence" value="ECO:0000318"/>
    <property type="project" value="GO_Central"/>
</dbReference>
<dbReference type="FunFam" id="1.10.10.1540:FF:000002">
    <property type="entry name" value="costars family protein ABRACL"/>
    <property type="match status" value="1"/>
</dbReference>
<dbReference type="Gene3D" id="1.10.10.1540">
    <property type="entry name" value="Costar domain"/>
    <property type="match status" value="1"/>
</dbReference>
<dbReference type="InterPro" id="IPR044302">
    <property type="entry name" value="Costars"/>
</dbReference>
<dbReference type="InterPro" id="IPR027817">
    <property type="entry name" value="Costars_dom"/>
</dbReference>
<dbReference type="InterPro" id="IPR038095">
    <property type="entry name" value="Costars_sf"/>
</dbReference>
<dbReference type="PANTHER" id="PTHR46334">
    <property type="entry name" value="COSTARS FAMILY PROTEIN ABRACL"/>
    <property type="match status" value="1"/>
</dbReference>
<dbReference type="PANTHER" id="PTHR46334:SF1">
    <property type="entry name" value="COSTARS FAMILY PROTEIN ABRACL"/>
    <property type="match status" value="1"/>
</dbReference>
<dbReference type="Pfam" id="PF14705">
    <property type="entry name" value="Costars"/>
    <property type="match status" value="1"/>
</dbReference>
<dbReference type="SMART" id="SM01283">
    <property type="entry name" value="Costars"/>
    <property type="match status" value="1"/>
</dbReference>
<name>ABRAL_XENLA</name>
<accession>Q498C5</accession>
<organism>
    <name type="scientific">Xenopus laevis</name>
    <name type="common">African clawed frog</name>
    <dbReference type="NCBI Taxonomy" id="8355"/>
    <lineage>
        <taxon>Eukaryota</taxon>
        <taxon>Metazoa</taxon>
        <taxon>Chordata</taxon>
        <taxon>Craniata</taxon>
        <taxon>Vertebrata</taxon>
        <taxon>Euteleostomi</taxon>
        <taxon>Amphibia</taxon>
        <taxon>Batrachia</taxon>
        <taxon>Anura</taxon>
        <taxon>Pipoidea</taxon>
        <taxon>Pipidae</taxon>
        <taxon>Xenopodinae</taxon>
        <taxon>Xenopus</taxon>
        <taxon>Xenopus</taxon>
    </lineage>
</organism>
<feature type="chain" id="PRO_0000365540" description="Costars family protein ABRACL">
    <location>
        <begin position="1"/>
        <end position="81"/>
    </location>
</feature>
<evidence type="ECO:0000305" key="1"/>
<reference key="1">
    <citation type="submission" date="2005-08" db="EMBL/GenBank/DDBJ databases">
        <authorList>
            <consortium name="NIH - Xenopus Gene Collection (XGC) project"/>
        </authorList>
    </citation>
    <scope>NUCLEOTIDE SEQUENCE [LARGE SCALE MRNA]</scope>
    <source>
        <tissue>Tadpole</tissue>
    </source>
</reference>
<sequence length="81" mass="8956">MNVDHEVNLLVGEIRRLGSKGNDGKFSVKFGVLFSDDKCANLFEALVGTLKAAKKRKIITYQGELLLQGVHDNVDIVLLQD</sequence>
<protein>
    <recommendedName>
        <fullName>Costars family protein ABRACL</fullName>
    </recommendedName>
    <alternativeName>
        <fullName>ABRA C-terminal-like protein</fullName>
    </alternativeName>
</protein>
<comment type="similarity">
    <text evidence="1">Belongs to the costars family.</text>
</comment>
<keyword id="KW-1185">Reference proteome</keyword>
<proteinExistence type="inferred from homology"/>
<gene>
    <name type="primary">abracl</name>
</gene>